<name>GALC_XENLA</name>
<organism>
    <name type="scientific">Xenopus laevis</name>
    <name type="common">African clawed frog</name>
    <dbReference type="NCBI Taxonomy" id="8355"/>
    <lineage>
        <taxon>Eukaryota</taxon>
        <taxon>Metazoa</taxon>
        <taxon>Chordata</taxon>
        <taxon>Craniata</taxon>
        <taxon>Vertebrata</taxon>
        <taxon>Euteleostomi</taxon>
        <taxon>Amphibia</taxon>
        <taxon>Batrachia</taxon>
        <taxon>Anura</taxon>
        <taxon>Pipoidea</taxon>
        <taxon>Pipidae</taxon>
        <taxon>Xenopodinae</taxon>
        <taxon>Xenopus</taxon>
        <taxon>Xenopus</taxon>
    </lineage>
</organism>
<sequence>MGTVPAGSRRAPGCGEGMFILCLALLLAPGAPAQYSVDDFGGLGRMFDGIGAISGGGATSRLLVNYPEPQRTEILDYLFKPNFGASLHIFKVEIGGDAQTTDGTEPSHMHYPDDQNYFRGYEWWLMKEAKKRNPAIKLIGLPWAFPGWIGYGKNWPYDFPDVTAYYVVSWIIGAKQYHNLDIDYIGIWNERAYDIKYIKVLRHTLDRLGLTNVGIIAADGDWGIAHDVLIDPYLNEAVQVIGAHYPGTHAAQDAIQTGKTLWASEDYSTYNDEVGGGCWARILNQNYVNGNMTSTISWNMVASYYEQLPFGLEGLMTAKEPWSGNYVVSTPIWITAHTTQFTQPGWYYLRTVGHLDKGGSYVALTDRLGNLTVIIETMSHNNSICIRPPLPEYNVSAQNATFYLQGSFQNLQELQVWYSNLDINNTKPVTFKKLTPVKVQNGSFTLQLGVNEVYTVTTLLTGQKGSFPDPPKSKPFPLKYKDDFSVRNPPFSEAPYFADQSGVFEYFTNTSDPGDHVFTFRQVLTQRPITWASDANQAISVIGNYQWSNITVTCDIYIETVETGGVFVAARVDQGGSPTDRAKGIFFWVFADGTYKVTGDLIGEIVLCKGLAGVRARSWHTLTLHVDGTNASGLLNGSPLWKEVVTGGPLHGWAAIGTSSFEFTQFDNFMIEAKDPE</sequence>
<proteinExistence type="evidence at transcript level"/>
<protein>
    <recommendedName>
        <fullName evidence="2">Galactocerebrosidase</fullName>
        <shortName>GALCERase</shortName>
        <ecNumber evidence="2">3.2.1.46</ecNumber>
    </recommendedName>
    <alternativeName>
        <fullName>Galactosylceramidase</fullName>
    </alternativeName>
</protein>
<dbReference type="EC" id="3.2.1.46" evidence="2"/>
<dbReference type="EMBL" id="BC081270">
    <property type="protein sequence ID" value="AAH81270.1"/>
    <property type="molecule type" value="mRNA"/>
</dbReference>
<dbReference type="EMBL" id="BC100187">
    <property type="protein sequence ID" value="AAI00188.1"/>
    <property type="status" value="ALT_INIT"/>
    <property type="molecule type" value="mRNA"/>
</dbReference>
<dbReference type="SMR" id="Q498K0"/>
<dbReference type="CAZy" id="GH59">
    <property type="family name" value="Glycoside Hydrolase Family 59"/>
</dbReference>
<dbReference type="GlyCosmos" id="Q498K0">
    <property type="glycosylation" value="10 sites, No reported glycans"/>
</dbReference>
<dbReference type="GeneID" id="446948"/>
<dbReference type="KEGG" id="xla:446948"/>
<dbReference type="AGR" id="Xenbase:XB-GENE-1000113"/>
<dbReference type="CTD" id="446948"/>
<dbReference type="Xenbase" id="XB-GENE-1000113">
    <property type="gene designation" value="galc.L"/>
</dbReference>
<dbReference type="OMA" id="KYPKNGW"/>
<dbReference type="OrthoDB" id="440760at2759"/>
<dbReference type="Proteomes" id="UP000186698">
    <property type="component" value="Chromosome 8L"/>
</dbReference>
<dbReference type="Bgee" id="446948">
    <property type="expression patterns" value="Expressed in internal ear and 19 other cell types or tissues"/>
</dbReference>
<dbReference type="GO" id="GO:0005764">
    <property type="term" value="C:lysosome"/>
    <property type="evidence" value="ECO:0000318"/>
    <property type="project" value="GO_Central"/>
</dbReference>
<dbReference type="GO" id="GO:0016020">
    <property type="term" value="C:membrane"/>
    <property type="evidence" value="ECO:0007669"/>
    <property type="project" value="GOC"/>
</dbReference>
<dbReference type="GO" id="GO:0004336">
    <property type="term" value="F:galactosylceramidase activity"/>
    <property type="evidence" value="ECO:0000250"/>
    <property type="project" value="UniProtKB"/>
</dbReference>
<dbReference type="GO" id="GO:0006683">
    <property type="term" value="P:galactosylceramide catabolic process"/>
    <property type="evidence" value="ECO:0000250"/>
    <property type="project" value="UniProtKB"/>
</dbReference>
<dbReference type="FunFam" id="2.60.120.560:FF:000001">
    <property type="entry name" value="galactocerebrosidase precursor"/>
    <property type="match status" value="1"/>
</dbReference>
<dbReference type="FunFam" id="3.20.20.70:FF:000091">
    <property type="entry name" value="galactocerebrosidase precursor"/>
    <property type="match status" value="1"/>
</dbReference>
<dbReference type="FunFam" id="3.20.20.80:FF:000026">
    <property type="entry name" value="galactocerebrosidase precursor"/>
    <property type="match status" value="1"/>
</dbReference>
<dbReference type="Gene3D" id="3.20.20.70">
    <property type="entry name" value="Aldolase class I"/>
    <property type="match status" value="1"/>
</dbReference>
<dbReference type="Gene3D" id="2.60.120.560">
    <property type="entry name" value="Exo-inulinase, domain 1"/>
    <property type="match status" value="1"/>
</dbReference>
<dbReference type="Gene3D" id="3.20.20.80">
    <property type="entry name" value="Glycosidases"/>
    <property type="match status" value="1"/>
</dbReference>
<dbReference type="InterPro" id="IPR013785">
    <property type="entry name" value="Aldolase_TIM"/>
</dbReference>
<dbReference type="InterPro" id="IPR049162">
    <property type="entry name" value="GH59_C"/>
</dbReference>
<dbReference type="InterPro" id="IPR049161">
    <property type="entry name" value="GH59_cat"/>
</dbReference>
<dbReference type="InterPro" id="IPR001286">
    <property type="entry name" value="Glyco_hydro_59"/>
</dbReference>
<dbReference type="InterPro" id="IPR035394">
    <property type="entry name" value="Glyco_hydro_59_dom"/>
</dbReference>
<dbReference type="InterPro" id="IPR017853">
    <property type="entry name" value="Glycoside_hydrolase_SF"/>
</dbReference>
<dbReference type="PANTHER" id="PTHR15172">
    <property type="entry name" value="GALACTOCEREBROSIDASE"/>
    <property type="match status" value="1"/>
</dbReference>
<dbReference type="PANTHER" id="PTHR15172:SF1">
    <property type="entry name" value="GALACTOCEREBROSIDASE"/>
    <property type="match status" value="1"/>
</dbReference>
<dbReference type="Pfam" id="PF02057">
    <property type="entry name" value="Glyco_hydro_59"/>
    <property type="match status" value="1"/>
</dbReference>
<dbReference type="Pfam" id="PF21708">
    <property type="entry name" value="Glyco_hydro_59_C"/>
    <property type="match status" value="1"/>
</dbReference>
<dbReference type="Pfam" id="PF17387">
    <property type="entry name" value="Glyco_hydro_59M"/>
    <property type="match status" value="1"/>
</dbReference>
<dbReference type="PRINTS" id="PR00850">
    <property type="entry name" value="GLHYDRLASE59"/>
</dbReference>
<dbReference type="SUPFAM" id="SSF51445">
    <property type="entry name" value="(Trans)glycosidases"/>
    <property type="match status" value="1"/>
</dbReference>
<feature type="signal peptide" evidence="4">
    <location>
        <begin position="1"/>
        <end position="33"/>
    </location>
</feature>
<feature type="chain" id="PRO_0000370715" description="Galactocerebrosidase">
    <location>
        <begin position="34"/>
        <end position="677"/>
    </location>
</feature>
<feature type="active site" description="Proton donor/acceptor" evidence="1">
    <location>
        <position position="190"/>
    </location>
</feature>
<feature type="active site" description="Nucleophile" evidence="1">
    <location>
        <position position="265"/>
    </location>
</feature>
<feature type="binding site" evidence="1">
    <location>
        <position position="101"/>
    </location>
    <ligand>
        <name>substrate</name>
    </ligand>
</feature>
<feature type="binding site" evidence="1">
    <location>
        <position position="143"/>
    </location>
    <ligand>
        <name>substrate</name>
    </ligand>
</feature>
<feature type="binding site" evidence="1">
    <location>
        <position position="189"/>
    </location>
    <ligand>
        <name>substrate</name>
    </ligand>
</feature>
<feature type="binding site" evidence="1">
    <location>
        <position position="387"/>
    </location>
    <ligand>
        <name>substrate</name>
    </ligand>
</feature>
<feature type="glycosylation site" description="N-linked (GlcNAc...) asparagine" evidence="4">
    <location>
        <position position="291"/>
    </location>
</feature>
<feature type="glycosylation site" description="N-linked (GlcNAc...) asparagine" evidence="4">
    <location>
        <position position="370"/>
    </location>
</feature>
<feature type="glycosylation site" description="N-linked (GlcNAc...) asparagine" evidence="4">
    <location>
        <position position="381"/>
    </location>
</feature>
<feature type="glycosylation site" description="N-linked (GlcNAc...) asparagine" evidence="4">
    <location>
        <position position="394"/>
    </location>
</feature>
<feature type="glycosylation site" description="N-linked (GlcNAc...) asparagine" evidence="4">
    <location>
        <position position="399"/>
    </location>
</feature>
<feature type="glycosylation site" description="N-linked (GlcNAc...) asparagine" evidence="4">
    <location>
        <position position="424"/>
    </location>
</feature>
<feature type="glycosylation site" description="N-linked (GlcNAc...) asparagine" evidence="4">
    <location>
        <position position="441"/>
    </location>
</feature>
<feature type="glycosylation site" description="N-linked (GlcNAc...) asparagine" evidence="4">
    <location>
        <position position="509"/>
    </location>
</feature>
<feature type="glycosylation site" description="N-linked (GlcNAc...) asparagine" evidence="4">
    <location>
        <position position="549"/>
    </location>
</feature>
<feature type="glycosylation site" description="N-linked (GlcNAc...) asparagine" evidence="4">
    <location>
        <position position="630"/>
    </location>
</feature>
<feature type="disulfide bond" evidence="1">
    <location>
        <begin position="278"/>
        <end position="385"/>
    </location>
</feature>
<gene>
    <name evidence="2" type="primary">galc</name>
</gene>
<accession>Q498K0</accession>
<accession>Q66IP0</accession>
<keyword id="KW-1015">Disulfide bond</keyword>
<keyword id="KW-0325">Glycoprotein</keyword>
<keyword id="KW-0326">Glycosidase</keyword>
<keyword id="KW-0378">Hydrolase</keyword>
<keyword id="KW-0442">Lipid degradation</keyword>
<keyword id="KW-0443">Lipid metabolism</keyword>
<keyword id="KW-0458">Lysosome</keyword>
<keyword id="KW-1185">Reference proteome</keyword>
<keyword id="KW-0732">Signal</keyword>
<keyword id="KW-0746">Sphingolipid metabolism</keyword>
<comment type="function">
    <text evidence="2">Hydrolyzes the galactose ester bonds of glycolipids such as galactosylceramide and galactosylsphingosine.</text>
</comment>
<comment type="catalytic activity">
    <reaction evidence="2">
        <text>a beta-D-galactosyl-(1&lt;-&gt;1')-N-acylsphing-4-enine + H2O = an N-acylsphing-4-enine + D-galactose</text>
        <dbReference type="Rhea" id="RHEA:14297"/>
        <dbReference type="ChEBI" id="CHEBI:4139"/>
        <dbReference type="ChEBI" id="CHEBI:15377"/>
        <dbReference type="ChEBI" id="CHEBI:18390"/>
        <dbReference type="ChEBI" id="CHEBI:52639"/>
        <dbReference type="EC" id="3.2.1.46"/>
    </reaction>
    <physiologicalReaction direction="left-to-right" evidence="2">
        <dbReference type="Rhea" id="RHEA:14298"/>
    </physiologicalReaction>
</comment>
<comment type="catalytic activity">
    <reaction evidence="2">
        <text>beta-D-galactosyl-(1&lt;-&gt;1)-sphing-4-enine + H2O = sphing-4-enine + D-galactose</text>
        <dbReference type="Rhea" id="RHEA:43908"/>
        <dbReference type="ChEBI" id="CHEBI:4139"/>
        <dbReference type="ChEBI" id="CHEBI:15377"/>
        <dbReference type="ChEBI" id="CHEBI:57756"/>
        <dbReference type="ChEBI" id="CHEBI:57934"/>
    </reaction>
    <physiologicalReaction direction="left-to-right" evidence="2">
        <dbReference type="Rhea" id="RHEA:43909"/>
    </physiologicalReaction>
</comment>
<comment type="catalytic activity">
    <reaction evidence="3">
        <text>a D-galactosylceramide + H2O = an N-acyl-sphingoid base + D-galactose</text>
        <dbReference type="Rhea" id="RHEA:43412"/>
        <dbReference type="ChEBI" id="CHEBI:4139"/>
        <dbReference type="ChEBI" id="CHEBI:15377"/>
        <dbReference type="ChEBI" id="CHEBI:36498"/>
        <dbReference type="ChEBI" id="CHEBI:83273"/>
    </reaction>
    <physiologicalReaction direction="left-to-right" evidence="3">
        <dbReference type="Rhea" id="RHEA:43413"/>
    </physiologicalReaction>
</comment>
<comment type="subcellular location">
    <subcellularLocation>
        <location evidence="1">Lysosome</location>
    </subcellularLocation>
</comment>
<comment type="similarity">
    <text evidence="5">Belongs to the glycosyl hydrolase 59 family.</text>
</comment>
<comment type="sequence caution" evidence="5">
    <conflict type="erroneous initiation">
        <sequence resource="EMBL-CDS" id="AAI00188"/>
    </conflict>
</comment>
<evidence type="ECO:0000250" key="1"/>
<evidence type="ECO:0000250" key="2">
    <source>
        <dbReference type="UniProtKB" id="P54803"/>
    </source>
</evidence>
<evidence type="ECO:0000250" key="3">
    <source>
        <dbReference type="UniProtKB" id="P54818"/>
    </source>
</evidence>
<evidence type="ECO:0000255" key="4"/>
<evidence type="ECO:0000305" key="5"/>
<reference key="1">
    <citation type="submission" date="2005-08" db="EMBL/GenBank/DDBJ databases">
        <authorList>
            <consortium name="NIH - Xenopus Gene Collection (XGC) project"/>
        </authorList>
    </citation>
    <scope>NUCLEOTIDE SEQUENCE [LARGE SCALE MRNA]</scope>
    <source>
        <tissue>Embryo</tissue>
        <tissue>Kidney</tissue>
    </source>
</reference>